<organism evidence="8">
    <name type="scientific">Caenorhabditis elegans</name>
    <dbReference type="NCBI Taxonomy" id="6239"/>
    <lineage>
        <taxon>Eukaryota</taxon>
        <taxon>Metazoa</taxon>
        <taxon>Ecdysozoa</taxon>
        <taxon>Nematoda</taxon>
        <taxon>Chromadorea</taxon>
        <taxon>Rhabditida</taxon>
        <taxon>Rhabditina</taxon>
        <taxon>Rhabditomorpha</taxon>
        <taxon>Rhabditoidea</taxon>
        <taxon>Rhabditidae</taxon>
        <taxon>Peloderinae</taxon>
        <taxon>Caenorhabditis</taxon>
    </lineage>
</organism>
<reference evidence="8" key="1">
    <citation type="journal article" date="1998" name="Science">
        <title>Genome sequence of the nematode C. elegans: a platform for investigating biology.</title>
        <authorList>
            <consortium name="The C. elegans sequencing consortium"/>
        </authorList>
    </citation>
    <scope>NUCLEOTIDE SEQUENCE [LARGE SCALE GENOMIC DNA]</scope>
    <source>
        <strain evidence="8">Bristol N2</strain>
    </source>
</reference>
<reference evidence="6" key="2">
    <citation type="journal article" date="2010" name="PLoS Pathog.">
        <title>Distinct pathogenesis and host responses during infection of C. elegans by P. aeruginosa and S. aureus.</title>
        <authorList>
            <person name="Irazoqui J.E."/>
            <person name="Troemel E.R."/>
            <person name="Feinbaum R.L."/>
            <person name="Luhachack L.G."/>
            <person name="Cezairliyan B.O."/>
            <person name="Ausubel F.M."/>
        </authorList>
    </citation>
    <scope>TISSUE SPECIFICITY</scope>
    <scope>INDUCTION</scope>
</reference>
<reference evidence="6" key="3">
    <citation type="journal article" date="2016" name="PLoS Pathog.">
        <title>The invertebrate lysozyme effector ILYS-3 is systemically activated in response to danger signals and confers antimicrobial protection in C. elegans.</title>
        <authorList>
            <person name="Gravato-Nobre M.J."/>
            <person name="Vaz F."/>
            <person name="Filipe S."/>
            <person name="Chalmers R."/>
            <person name="Hodgkin J."/>
        </authorList>
    </citation>
    <scope>FUNCTION</scope>
    <scope>CATALYTIC ACTIVITY</scope>
    <scope>BIOPHYSICOCHEMICAL PROPERTIES</scope>
    <scope>SUBCELLULAR LOCATION</scope>
    <scope>TISSUE SPECIFICITY</scope>
    <scope>DEVELOPMENTAL STAGE</scope>
    <scope>INDUCTION</scope>
    <scope>DISRUPTION PHENOTYPE</scope>
</reference>
<proteinExistence type="evidence at protein level"/>
<protein>
    <recommendedName>
        <fullName evidence="6">Invertebrate-type lysozyme 3</fullName>
        <ecNumber evidence="7">3.2.1.17</ecNumber>
    </recommendedName>
    <alternativeName>
        <fullName evidence="6">1,4-beta-N-acetylmuramidase</fullName>
    </alternativeName>
</protein>
<feature type="signal peptide" evidence="2">
    <location>
        <begin position="1"/>
        <end position="18"/>
    </location>
</feature>
<feature type="chain" id="PRO_5004159989" description="Invertebrate-type lysozyme 3" evidence="2">
    <location>
        <begin position="19"/>
        <end position="139"/>
    </location>
</feature>
<feature type="domain" description="I-type lysozyme" evidence="3">
    <location>
        <begin position="19"/>
        <end position="138"/>
    </location>
</feature>
<feature type="active site" description="Proton donor" evidence="3">
    <location>
        <position position="28"/>
    </location>
</feature>
<feature type="active site" description="Nucleophile" evidence="3">
    <location>
        <position position="39"/>
    </location>
</feature>
<feature type="binding site" evidence="1">
    <location>
        <begin position="51"/>
        <end position="57"/>
    </location>
    <ligand>
        <name>substrate</name>
    </ligand>
</feature>
<feature type="binding site" evidence="1">
    <location>
        <position position="90"/>
    </location>
    <ligand>
        <name>substrate</name>
    </ligand>
</feature>
<feature type="binding site" evidence="1">
    <location>
        <begin position="113"/>
        <end position="115"/>
    </location>
    <ligand>
        <name>substrate</name>
    </ligand>
</feature>
<feature type="disulfide bond" evidence="3">
    <location>
        <begin position="20"/>
        <end position="106"/>
    </location>
</feature>
<feature type="disulfide bond" evidence="3">
    <location>
        <begin position="23"/>
        <end position="138"/>
    </location>
</feature>
<feature type="disulfide bond" evidence="3">
    <location>
        <begin position="25"/>
        <end position="31"/>
    </location>
</feature>
<feature type="disulfide bond" evidence="3">
    <location>
        <begin position="36"/>
        <end position="45"/>
    </location>
</feature>
<feature type="disulfide bond" evidence="3">
    <location>
        <begin position="58"/>
        <end position="86"/>
    </location>
</feature>
<feature type="disulfide bond" evidence="3">
    <location>
        <begin position="76"/>
        <end position="82"/>
    </location>
</feature>
<feature type="disulfide bond" evidence="3">
    <location>
        <begin position="98"/>
        <end position="120"/>
    </location>
</feature>
<accession>O76357</accession>
<comment type="function">
    <text evidence="5">Has bacteriolytic activity against Gram-positive bacteria. Plays a role in defense against bacterial pathogens. Involved in pharyngeal grinder function by enabling proper lysis of ingested bacteria.</text>
</comment>
<comment type="catalytic activity">
    <reaction evidence="7">
        <text>Hydrolysis of (1-&gt;4)-beta-linkages between N-acetylmuramic acid and N-acetyl-D-glucosamine residues in a peptidoglycan and between N-acetyl-D-glucosamine residues in chitodextrins.</text>
        <dbReference type="EC" id="3.2.1.17"/>
    </reaction>
</comment>
<comment type="biophysicochemical properties">
    <phDependence>
        <text evidence="5">Optimum pH is 4.5-5.</text>
    </phDependence>
</comment>
<comment type="subcellular location">
    <subcellularLocation>
        <location evidence="5">Late endosome lumen</location>
    </subcellularLocation>
    <subcellularLocation>
        <location evidence="5">Recycling endosome lumen</location>
    </subcellularLocation>
    <subcellularLocation>
        <location evidence="5">Lysosome lumen</location>
    </subcellularLocation>
    <subcellularLocation>
        <location evidence="5">Secreted</location>
    </subcellularLocation>
    <text evidence="5">Predominantly localizes to the recycling endosomal network in the basolateral region of intestinal cells. Secreted in the intestinal lumen only during dauer arrest stage, aging, or starvation.</text>
</comment>
<comment type="tissue specificity">
    <text evidence="4 5">Expressed in pharynx grinder muscle pm7, isthmus marginal cell mc2 and pharyngeal muscle cell pm5, intestinal cells and at lower levels in coelomocytes and epidermis (PubMed:27525822). Expressed at low levels in intestine (PubMed:20617181).</text>
</comment>
<comment type="developmental stage">
    <text evidence="5">Expression levels are low throughout larval stages and then increase in adults. Intestinal expression starts at the L1 larval stage, declines at the L2 larval stage and increases again in L4 larvae and adults. Highly expressed in the intestinal lumen of dauer larvae and, old and no longer self-fertile adults.</text>
</comment>
<comment type="induction">
    <text evidence="4 5">Induced in the intestine by Gram-positive bacteria M.nematophilum CBX102 and UV336 and M.luteus DMS20030 infection but not by Gram-negative bacterium P.aeruginosa PAO1 infection (PubMed:27525822). Induced in the intestine, pharynx and vulva by Gram-positive bacterium S.aureus infection (PubMed:20617181). Induced by Gram-positive bacterium B.subtilis (PubMed:20617181). Induced by starvation (PubMed:27525822).</text>
</comment>
<comment type="disruption phenotype">
    <text evidence="5">Slight reduction in brood size. 24 percent reduction in lifespan which is further reduced upon M.nematophilum CBX102 bacterial infection. Impaired food digestion characterized by the accumulation of unlysed E.coli in the intestine. Accumulation of unlysed bacteria is stronger upon M.nematophilum CBX102 infection.</text>
</comment>
<comment type="similarity">
    <text evidence="3">Belongs to the glycosyl hydrolase 22 family. Type-I lysozyme subfamily.</text>
</comment>
<keyword id="KW-0044">Antibiotic</keyword>
<keyword id="KW-0929">Antimicrobial</keyword>
<keyword id="KW-0081">Bacteriolytic enzyme</keyword>
<keyword id="KW-0222">Digestion</keyword>
<keyword id="KW-1015">Disulfide bond</keyword>
<keyword id="KW-0967">Endosome</keyword>
<keyword id="KW-0326">Glycosidase</keyword>
<keyword id="KW-0378">Hydrolase</keyword>
<keyword id="KW-0458">Lysosome</keyword>
<keyword id="KW-1185">Reference proteome</keyword>
<keyword id="KW-0964">Secreted</keyword>
<keyword id="KW-0732">Signal</keyword>
<name>ILYS3_CAEEL</name>
<dbReference type="EC" id="3.2.1.17" evidence="7"/>
<dbReference type="EMBL" id="BX284604">
    <property type="protein sequence ID" value="CCD65531.1"/>
    <property type="molecule type" value="Genomic_DNA"/>
</dbReference>
<dbReference type="PIR" id="T33137">
    <property type="entry name" value="T33137"/>
</dbReference>
<dbReference type="RefSeq" id="NP_500206.1">
    <property type="nucleotide sequence ID" value="NM_067805.5"/>
</dbReference>
<dbReference type="SMR" id="O76357"/>
<dbReference type="FunCoup" id="O76357">
    <property type="interactions" value="7"/>
</dbReference>
<dbReference type="STRING" id="6239.C45G7.3.1"/>
<dbReference type="CAZy" id="GH22">
    <property type="family name" value="Glycoside Hydrolase Family 22"/>
</dbReference>
<dbReference type="MEROPS" id="S81.001"/>
<dbReference type="PaxDb" id="6239-C45G7.3"/>
<dbReference type="PeptideAtlas" id="O76357"/>
<dbReference type="EnsemblMetazoa" id="C45G7.3.1">
    <property type="protein sequence ID" value="C45G7.3.1"/>
    <property type="gene ID" value="WBGene00016670"/>
</dbReference>
<dbReference type="GeneID" id="177033"/>
<dbReference type="KEGG" id="cel:CELE_C45G7.3"/>
<dbReference type="UCSC" id="C45G7.3">
    <property type="organism name" value="c. elegans"/>
</dbReference>
<dbReference type="AGR" id="WB:WBGene00016670"/>
<dbReference type="CTD" id="177033"/>
<dbReference type="WormBase" id="C45G7.3">
    <property type="protein sequence ID" value="CE24850"/>
    <property type="gene ID" value="WBGene00016670"/>
    <property type="gene designation" value="ilys-3"/>
</dbReference>
<dbReference type="eggNOG" id="ENOG502SAEY">
    <property type="taxonomic scope" value="Eukaryota"/>
</dbReference>
<dbReference type="GeneTree" id="ENSGT00940000166559"/>
<dbReference type="HOGENOM" id="CLU_130604_1_0_1"/>
<dbReference type="InParanoid" id="O76357"/>
<dbReference type="OMA" id="INCANDP"/>
<dbReference type="OrthoDB" id="6337871at2759"/>
<dbReference type="PhylomeDB" id="O76357"/>
<dbReference type="PRO" id="PR:O76357"/>
<dbReference type="Proteomes" id="UP000001940">
    <property type="component" value="Chromosome IV"/>
</dbReference>
<dbReference type="Bgee" id="WBGene00016670">
    <property type="expression patterns" value="Expressed in adult organism and 1 other cell type or tissue"/>
</dbReference>
<dbReference type="GO" id="GO:0005576">
    <property type="term" value="C:extracellular region"/>
    <property type="evidence" value="ECO:0007669"/>
    <property type="project" value="UniProtKB-SubCell"/>
</dbReference>
<dbReference type="GO" id="GO:0031906">
    <property type="term" value="C:late endosome lumen"/>
    <property type="evidence" value="ECO:0000314"/>
    <property type="project" value="UniProtKB"/>
</dbReference>
<dbReference type="GO" id="GO:0043202">
    <property type="term" value="C:lysosomal lumen"/>
    <property type="evidence" value="ECO:0000314"/>
    <property type="project" value="UniProtKB"/>
</dbReference>
<dbReference type="GO" id="GO:0034777">
    <property type="term" value="C:recycling endosome lumen"/>
    <property type="evidence" value="ECO:0000314"/>
    <property type="project" value="UniProtKB"/>
</dbReference>
<dbReference type="GO" id="GO:0003796">
    <property type="term" value="F:lysozyme activity"/>
    <property type="evidence" value="ECO:0000314"/>
    <property type="project" value="UniProtKB"/>
</dbReference>
<dbReference type="GO" id="GO:0140367">
    <property type="term" value="P:antibacterial innate immune response"/>
    <property type="evidence" value="ECO:0000315"/>
    <property type="project" value="UniProtKB"/>
</dbReference>
<dbReference type="GO" id="GO:0050830">
    <property type="term" value="P:defense response to Gram-positive bacterium"/>
    <property type="evidence" value="ECO:0000315"/>
    <property type="project" value="UniProtKB"/>
</dbReference>
<dbReference type="GO" id="GO:0007586">
    <property type="term" value="P:digestion"/>
    <property type="evidence" value="ECO:0007669"/>
    <property type="project" value="UniProtKB-KW"/>
</dbReference>
<dbReference type="GO" id="GO:0031640">
    <property type="term" value="P:killing of cells of another organism"/>
    <property type="evidence" value="ECO:0007669"/>
    <property type="project" value="UniProtKB-KW"/>
</dbReference>
<dbReference type="CDD" id="cd16890">
    <property type="entry name" value="lyz_i"/>
    <property type="match status" value="1"/>
</dbReference>
<dbReference type="FunFam" id="1.10.530.10:FF:000023">
    <property type="entry name" value="Invertebrate-type lysozyme"/>
    <property type="match status" value="1"/>
</dbReference>
<dbReference type="Gene3D" id="1.10.530.10">
    <property type="match status" value="1"/>
</dbReference>
<dbReference type="InterPro" id="IPR008597">
    <property type="entry name" value="Invert_lysozyme"/>
</dbReference>
<dbReference type="InterPro" id="IPR023346">
    <property type="entry name" value="Lysozyme-like_dom_sf"/>
</dbReference>
<dbReference type="PANTHER" id="PTHR11195">
    <property type="entry name" value="DESTABILASE-RELATED"/>
    <property type="match status" value="1"/>
</dbReference>
<dbReference type="PANTHER" id="PTHR11195:SF13">
    <property type="entry name" value="INVERTEBRATE-TYPE LYSOZYME 2-RELATED"/>
    <property type="match status" value="1"/>
</dbReference>
<dbReference type="Pfam" id="PF05497">
    <property type="entry name" value="Destabilase"/>
    <property type="match status" value="1"/>
</dbReference>
<dbReference type="SUPFAM" id="SSF53955">
    <property type="entry name" value="Lysozyme-like"/>
    <property type="match status" value="1"/>
</dbReference>
<dbReference type="PROSITE" id="PS51909">
    <property type="entry name" value="LYSOZYME_I"/>
    <property type="match status" value="1"/>
</dbReference>
<sequence length="139" mass="14995">MFVKSLVFLTIAVAYASADCLHCICMRESGCKPIGCNMDVGSLSCGYYQIKLPYYEDCGQPTKKSGETTEAAWKRCANDLSCATTCVENYYNRYKSQCAGTGQGACEVMARNHNGGPQGCKHSGTLGYWNGIKSCCGCS</sequence>
<evidence type="ECO:0000250" key="1">
    <source>
        <dbReference type="UniProtKB" id="Q8IU26"/>
    </source>
</evidence>
<evidence type="ECO:0000255" key="2"/>
<evidence type="ECO:0000255" key="3">
    <source>
        <dbReference type="PROSITE-ProRule" id="PRU01257"/>
    </source>
</evidence>
<evidence type="ECO:0000269" key="4">
    <source>
    </source>
</evidence>
<evidence type="ECO:0000269" key="5">
    <source>
    </source>
</evidence>
<evidence type="ECO:0000305" key="6"/>
<evidence type="ECO:0000305" key="7">
    <source>
    </source>
</evidence>
<evidence type="ECO:0000312" key="8">
    <source>
        <dbReference type="Proteomes" id="UP000001940"/>
    </source>
</evidence>
<evidence type="ECO:0000312" key="9">
    <source>
        <dbReference type="WormBase" id="C45G7.3"/>
    </source>
</evidence>
<gene>
    <name evidence="9" type="primary">ilys-3</name>
    <name evidence="9" type="ORF">C45G7.3</name>
</gene>